<protein>
    <recommendedName>
        <fullName evidence="1">Small ribosomal subunit protein bS21</fullName>
    </recommendedName>
    <alternativeName>
        <fullName evidence="3">30S ribosomal protein S21</fullName>
    </alternativeName>
</protein>
<accession>A8APV6</accession>
<gene>
    <name evidence="1" type="primary">rpsU</name>
    <name type="ordered locus">CKO_04462</name>
</gene>
<keyword id="KW-0002">3D-structure</keyword>
<keyword id="KW-1185">Reference proteome</keyword>
<keyword id="KW-0687">Ribonucleoprotein</keyword>
<keyword id="KW-0689">Ribosomal protein</keyword>
<comment type="similarity">
    <text evidence="1">Belongs to the bacterial ribosomal protein bS21 family.</text>
</comment>
<proteinExistence type="evidence at protein level"/>
<reference key="1">
    <citation type="submission" date="2007-08" db="EMBL/GenBank/DDBJ databases">
        <authorList>
            <consortium name="The Citrobacter koseri Genome Sequencing Project"/>
            <person name="McClelland M."/>
            <person name="Sanderson E.K."/>
            <person name="Porwollik S."/>
            <person name="Spieth J."/>
            <person name="Clifton W.S."/>
            <person name="Latreille P."/>
            <person name="Courtney L."/>
            <person name="Wang C."/>
            <person name="Pepin K."/>
            <person name="Bhonagiri V."/>
            <person name="Nash W."/>
            <person name="Johnson M."/>
            <person name="Thiruvilangam P."/>
            <person name="Wilson R."/>
        </authorList>
    </citation>
    <scope>NUCLEOTIDE SEQUENCE [LARGE SCALE GENOMIC DNA]</scope>
    <source>
        <strain>ATCC BAA-895 / CDC 4225-83 / SGSC4696</strain>
    </source>
</reference>
<sequence length="71" mass="8500">MPVIKVRENEPFDVALRRFKRSCEKAGVLAEVRRREFYEKPTTERKRAKASAVKRHAKKLARENARRTRLY</sequence>
<dbReference type="EMBL" id="CP000822">
    <property type="protein sequence ID" value="ABV15518.1"/>
    <property type="molecule type" value="Genomic_DNA"/>
</dbReference>
<dbReference type="RefSeq" id="WP_001144069.1">
    <property type="nucleotide sequence ID" value="NC_009792.1"/>
</dbReference>
<dbReference type="PDB" id="5IT8">
    <property type="method" value="X-ray"/>
    <property type="resolution" value="3.12 A"/>
    <property type="chains" value="AU/BU=2-57"/>
</dbReference>
<dbReference type="PDBsum" id="5IT8"/>
<dbReference type="SMR" id="A8APV6"/>
<dbReference type="STRING" id="290338.CKO_04462"/>
<dbReference type="GeneID" id="98390195"/>
<dbReference type="KEGG" id="cko:CKO_04462"/>
<dbReference type="HOGENOM" id="CLU_159258_1_0_6"/>
<dbReference type="OrthoDB" id="9799244at2"/>
<dbReference type="Proteomes" id="UP000008148">
    <property type="component" value="Chromosome"/>
</dbReference>
<dbReference type="GO" id="GO:1990904">
    <property type="term" value="C:ribonucleoprotein complex"/>
    <property type="evidence" value="ECO:0007669"/>
    <property type="project" value="UniProtKB-KW"/>
</dbReference>
<dbReference type="GO" id="GO:0005840">
    <property type="term" value="C:ribosome"/>
    <property type="evidence" value="ECO:0007669"/>
    <property type="project" value="UniProtKB-KW"/>
</dbReference>
<dbReference type="GO" id="GO:0003735">
    <property type="term" value="F:structural constituent of ribosome"/>
    <property type="evidence" value="ECO:0007669"/>
    <property type="project" value="InterPro"/>
</dbReference>
<dbReference type="GO" id="GO:0006412">
    <property type="term" value="P:translation"/>
    <property type="evidence" value="ECO:0007669"/>
    <property type="project" value="UniProtKB-UniRule"/>
</dbReference>
<dbReference type="FunFam" id="1.20.5.1150:FF:000001">
    <property type="entry name" value="30S ribosomal protein S21"/>
    <property type="match status" value="1"/>
</dbReference>
<dbReference type="Gene3D" id="1.20.5.1150">
    <property type="entry name" value="Ribosomal protein S8"/>
    <property type="match status" value="1"/>
</dbReference>
<dbReference type="HAMAP" id="MF_00358">
    <property type="entry name" value="Ribosomal_bS21"/>
    <property type="match status" value="1"/>
</dbReference>
<dbReference type="InterPro" id="IPR001911">
    <property type="entry name" value="Ribosomal_bS21"/>
</dbReference>
<dbReference type="InterPro" id="IPR018278">
    <property type="entry name" value="Ribosomal_bS21_CS"/>
</dbReference>
<dbReference type="InterPro" id="IPR038380">
    <property type="entry name" value="Ribosomal_bS21_sf"/>
</dbReference>
<dbReference type="NCBIfam" id="TIGR00030">
    <property type="entry name" value="S21p"/>
    <property type="match status" value="1"/>
</dbReference>
<dbReference type="PANTHER" id="PTHR21109">
    <property type="entry name" value="MITOCHONDRIAL 28S RIBOSOMAL PROTEIN S21"/>
    <property type="match status" value="1"/>
</dbReference>
<dbReference type="PANTHER" id="PTHR21109:SF22">
    <property type="entry name" value="SMALL RIBOSOMAL SUBUNIT PROTEIN BS21"/>
    <property type="match status" value="1"/>
</dbReference>
<dbReference type="Pfam" id="PF01165">
    <property type="entry name" value="Ribosomal_S21"/>
    <property type="match status" value="1"/>
</dbReference>
<dbReference type="PRINTS" id="PR00976">
    <property type="entry name" value="RIBOSOMALS21"/>
</dbReference>
<dbReference type="PROSITE" id="PS01181">
    <property type="entry name" value="RIBOSOMAL_S21"/>
    <property type="match status" value="1"/>
</dbReference>
<feature type="chain" id="PRO_1000005108" description="Small ribosomal subunit protein bS21">
    <location>
        <begin position="1"/>
        <end position="71"/>
    </location>
</feature>
<feature type="region of interest" description="Disordered" evidence="2">
    <location>
        <begin position="43"/>
        <end position="71"/>
    </location>
</feature>
<feature type="compositionally biased region" description="Basic residues" evidence="2">
    <location>
        <begin position="46"/>
        <end position="59"/>
    </location>
</feature>
<feature type="compositionally biased region" description="Basic and acidic residues" evidence="2">
    <location>
        <begin position="60"/>
        <end position="71"/>
    </location>
</feature>
<evidence type="ECO:0000255" key="1">
    <source>
        <dbReference type="HAMAP-Rule" id="MF_00358"/>
    </source>
</evidence>
<evidence type="ECO:0000256" key="2">
    <source>
        <dbReference type="SAM" id="MobiDB-lite"/>
    </source>
</evidence>
<evidence type="ECO:0000305" key="3"/>
<name>RS21_CITK8</name>
<organism>
    <name type="scientific">Citrobacter koseri (strain ATCC BAA-895 / CDC 4225-83 / SGSC4696)</name>
    <dbReference type="NCBI Taxonomy" id="290338"/>
    <lineage>
        <taxon>Bacteria</taxon>
        <taxon>Pseudomonadati</taxon>
        <taxon>Pseudomonadota</taxon>
        <taxon>Gammaproteobacteria</taxon>
        <taxon>Enterobacterales</taxon>
        <taxon>Enterobacteriaceae</taxon>
        <taxon>Citrobacter</taxon>
    </lineage>
</organism>